<proteinExistence type="inferred from homology"/>
<dbReference type="EMBL" id="AE016877">
    <property type="protein sequence ID" value="AAP07337.1"/>
    <property type="molecule type" value="Genomic_DNA"/>
</dbReference>
<dbReference type="RefSeq" id="NP_830136.1">
    <property type="nucleotide sequence ID" value="NC_004722.1"/>
</dbReference>
<dbReference type="RefSeq" id="WP_000344231.1">
    <property type="nucleotide sequence ID" value="NZ_CP138336.1"/>
</dbReference>
<dbReference type="STRING" id="226900.BC_0268"/>
<dbReference type="KEGG" id="bce:BC0268"/>
<dbReference type="PATRIC" id="fig|226900.8.peg.269"/>
<dbReference type="HOGENOM" id="CLU_123820_0_0_9"/>
<dbReference type="OrthoDB" id="9799909at2"/>
<dbReference type="Proteomes" id="UP000001417">
    <property type="component" value="Chromosome"/>
</dbReference>
<dbReference type="GO" id="GO:0005737">
    <property type="term" value="C:cytoplasm"/>
    <property type="evidence" value="ECO:0007669"/>
    <property type="project" value="UniProtKB-SubCell"/>
</dbReference>
<dbReference type="GO" id="GO:0008270">
    <property type="term" value="F:zinc ion binding"/>
    <property type="evidence" value="ECO:0007669"/>
    <property type="project" value="UniProtKB-UniRule"/>
</dbReference>
<dbReference type="GO" id="GO:0006950">
    <property type="term" value="P:response to stress"/>
    <property type="evidence" value="ECO:0007669"/>
    <property type="project" value="UniProtKB-ARBA"/>
</dbReference>
<dbReference type="HAMAP" id="MF_00745">
    <property type="entry name" value="SprT_like"/>
    <property type="match status" value="1"/>
</dbReference>
<dbReference type="InterPro" id="IPR006640">
    <property type="entry name" value="SprT-like_domain"/>
</dbReference>
<dbReference type="InterPro" id="IPR035240">
    <property type="entry name" value="SprT_Zn_ribbon"/>
</dbReference>
<dbReference type="InterPro" id="IPR023524">
    <property type="entry name" value="Uncharacterised_SprT-like"/>
</dbReference>
<dbReference type="NCBIfam" id="NF003339">
    <property type="entry name" value="PRK04351.1"/>
    <property type="match status" value="1"/>
</dbReference>
<dbReference type="Pfam" id="PF10263">
    <property type="entry name" value="SprT-like"/>
    <property type="match status" value="1"/>
</dbReference>
<dbReference type="Pfam" id="PF17283">
    <property type="entry name" value="Zn_ribbon_SprT"/>
    <property type="match status" value="1"/>
</dbReference>
<dbReference type="SMART" id="SM00731">
    <property type="entry name" value="SprT"/>
    <property type="match status" value="1"/>
</dbReference>
<gene>
    <name type="ordered locus">BC_0268</name>
</gene>
<feature type="chain" id="PRO_0000213286" description="Protein SprT-like">
    <location>
        <begin position="1"/>
        <end position="152"/>
    </location>
</feature>
<feature type="domain" description="SprT-like" evidence="1">
    <location>
        <begin position="7"/>
        <end position="147"/>
    </location>
</feature>
<feature type="active site" evidence="1">
    <location>
        <position position="68"/>
    </location>
</feature>
<feature type="binding site" evidence="1">
    <location>
        <position position="67"/>
    </location>
    <ligand>
        <name>Zn(2+)</name>
        <dbReference type="ChEBI" id="CHEBI:29105"/>
    </ligand>
</feature>
<feature type="binding site" evidence="1">
    <location>
        <position position="71"/>
    </location>
    <ligand>
        <name>Zn(2+)</name>
        <dbReference type="ChEBI" id="CHEBI:29105"/>
    </ligand>
</feature>
<keyword id="KW-0963">Cytoplasm</keyword>
<keyword id="KW-0479">Metal-binding</keyword>
<keyword id="KW-1185">Reference proteome</keyword>
<keyword id="KW-0862">Zinc</keyword>
<sequence length="152" mass="18441">MDEQEIQRLVEEVSLQYFEMPFLHKAVFNNRLRTTGGRYLLKSHNIELNYRYYELYGEEELVGIIKHELCHYHLHIAGRGYKHGDRDFRELLKKVDAPRFCKRMINEEKEKKIYKYECMECSLQYVRRRQINIKRYVCGKCKGKLKPISKTS</sequence>
<name>SPRTL_BACCR</name>
<comment type="cofactor">
    <cofactor evidence="1">
        <name>Zn(2+)</name>
        <dbReference type="ChEBI" id="CHEBI:29105"/>
    </cofactor>
    <text evidence="1">Binds 1 zinc ion.</text>
</comment>
<comment type="subcellular location">
    <subcellularLocation>
        <location evidence="1">Cytoplasm</location>
    </subcellularLocation>
</comment>
<comment type="similarity">
    <text evidence="1">Belongs to the SprT family.</text>
</comment>
<evidence type="ECO:0000255" key="1">
    <source>
        <dbReference type="HAMAP-Rule" id="MF_00745"/>
    </source>
</evidence>
<organism>
    <name type="scientific">Bacillus cereus (strain ATCC 14579 / DSM 31 / CCUG 7414 / JCM 2152 / NBRC 15305 / NCIMB 9373 / NCTC 2599 / NRRL B-3711)</name>
    <dbReference type="NCBI Taxonomy" id="226900"/>
    <lineage>
        <taxon>Bacteria</taxon>
        <taxon>Bacillati</taxon>
        <taxon>Bacillota</taxon>
        <taxon>Bacilli</taxon>
        <taxon>Bacillales</taxon>
        <taxon>Bacillaceae</taxon>
        <taxon>Bacillus</taxon>
        <taxon>Bacillus cereus group</taxon>
    </lineage>
</organism>
<protein>
    <recommendedName>
        <fullName evidence="1">Protein SprT-like</fullName>
    </recommendedName>
</protein>
<accession>Q81IT2</accession>
<reference key="1">
    <citation type="journal article" date="2003" name="Nature">
        <title>Genome sequence of Bacillus cereus and comparative analysis with Bacillus anthracis.</title>
        <authorList>
            <person name="Ivanova N."/>
            <person name="Sorokin A."/>
            <person name="Anderson I."/>
            <person name="Galleron N."/>
            <person name="Candelon B."/>
            <person name="Kapatral V."/>
            <person name="Bhattacharyya A."/>
            <person name="Reznik G."/>
            <person name="Mikhailova N."/>
            <person name="Lapidus A."/>
            <person name="Chu L."/>
            <person name="Mazur M."/>
            <person name="Goltsman E."/>
            <person name="Larsen N."/>
            <person name="D'Souza M."/>
            <person name="Walunas T."/>
            <person name="Grechkin Y."/>
            <person name="Pusch G."/>
            <person name="Haselkorn R."/>
            <person name="Fonstein M."/>
            <person name="Ehrlich S.D."/>
            <person name="Overbeek R."/>
            <person name="Kyrpides N.C."/>
        </authorList>
    </citation>
    <scope>NUCLEOTIDE SEQUENCE [LARGE SCALE GENOMIC DNA]</scope>
    <source>
        <strain>ATCC 14579 / DSM 31 / CCUG 7414 / JCM 2152 / NBRC 15305 / NCIMB 9373 / NCTC 2599 / NRRL B-3711</strain>
    </source>
</reference>